<protein>
    <recommendedName>
        <fullName evidence="1">Serine--tRNA ligase</fullName>
        <ecNumber evidence="1">6.1.1.11</ecNumber>
    </recommendedName>
    <alternativeName>
        <fullName evidence="1">Seryl-tRNA synthetase</fullName>
        <shortName evidence="1">SerRS</shortName>
    </alternativeName>
    <alternativeName>
        <fullName evidence="1">Seryl-tRNA(Ser/Sec) synthetase</fullName>
    </alternativeName>
</protein>
<proteinExistence type="inferred from homology"/>
<comment type="function">
    <text evidence="1">Catalyzes the attachment of serine to tRNA(Ser). Is also able to aminoacylate tRNA(Sec) with serine, to form the misacylated tRNA L-seryl-tRNA(Sec), which will be further converted into selenocysteinyl-tRNA(Sec).</text>
</comment>
<comment type="catalytic activity">
    <reaction evidence="1">
        <text>tRNA(Ser) + L-serine + ATP = L-seryl-tRNA(Ser) + AMP + diphosphate + H(+)</text>
        <dbReference type="Rhea" id="RHEA:12292"/>
        <dbReference type="Rhea" id="RHEA-COMP:9669"/>
        <dbReference type="Rhea" id="RHEA-COMP:9703"/>
        <dbReference type="ChEBI" id="CHEBI:15378"/>
        <dbReference type="ChEBI" id="CHEBI:30616"/>
        <dbReference type="ChEBI" id="CHEBI:33019"/>
        <dbReference type="ChEBI" id="CHEBI:33384"/>
        <dbReference type="ChEBI" id="CHEBI:78442"/>
        <dbReference type="ChEBI" id="CHEBI:78533"/>
        <dbReference type="ChEBI" id="CHEBI:456215"/>
        <dbReference type="EC" id="6.1.1.11"/>
    </reaction>
</comment>
<comment type="catalytic activity">
    <reaction evidence="1">
        <text>tRNA(Sec) + L-serine + ATP = L-seryl-tRNA(Sec) + AMP + diphosphate + H(+)</text>
        <dbReference type="Rhea" id="RHEA:42580"/>
        <dbReference type="Rhea" id="RHEA-COMP:9742"/>
        <dbReference type="Rhea" id="RHEA-COMP:10128"/>
        <dbReference type="ChEBI" id="CHEBI:15378"/>
        <dbReference type="ChEBI" id="CHEBI:30616"/>
        <dbReference type="ChEBI" id="CHEBI:33019"/>
        <dbReference type="ChEBI" id="CHEBI:33384"/>
        <dbReference type="ChEBI" id="CHEBI:78442"/>
        <dbReference type="ChEBI" id="CHEBI:78533"/>
        <dbReference type="ChEBI" id="CHEBI:456215"/>
        <dbReference type="EC" id="6.1.1.11"/>
    </reaction>
</comment>
<comment type="pathway">
    <text evidence="1">Aminoacyl-tRNA biosynthesis; selenocysteinyl-tRNA(Sec) biosynthesis; L-seryl-tRNA(Sec) from L-serine and tRNA(Sec): step 1/1.</text>
</comment>
<comment type="subunit">
    <text evidence="1">Homodimer. The tRNA molecule binds across the dimer.</text>
</comment>
<comment type="subcellular location">
    <subcellularLocation>
        <location evidence="1">Cytoplasm</location>
    </subcellularLocation>
</comment>
<comment type="domain">
    <text evidence="1">Consists of two distinct domains, a catalytic core and a N-terminal extension that is involved in tRNA binding.</text>
</comment>
<comment type="similarity">
    <text evidence="1">Belongs to the class-II aminoacyl-tRNA synthetase family. Type-1 seryl-tRNA synthetase subfamily.</text>
</comment>
<gene>
    <name evidence="1" type="primary">serS</name>
    <name type="ordered locus">Tlet_0230</name>
</gene>
<accession>A8F3R6</accession>
<reference key="1">
    <citation type="submission" date="2007-08" db="EMBL/GenBank/DDBJ databases">
        <title>Complete sequence of Thermotoga lettingae TMO.</title>
        <authorList>
            <consortium name="US DOE Joint Genome Institute"/>
            <person name="Copeland A."/>
            <person name="Lucas S."/>
            <person name="Lapidus A."/>
            <person name="Barry K."/>
            <person name="Glavina del Rio T."/>
            <person name="Dalin E."/>
            <person name="Tice H."/>
            <person name="Pitluck S."/>
            <person name="Foster B."/>
            <person name="Bruce D."/>
            <person name="Schmutz J."/>
            <person name="Larimer F."/>
            <person name="Land M."/>
            <person name="Hauser L."/>
            <person name="Kyrpides N."/>
            <person name="Mikhailova N."/>
            <person name="Nelson K."/>
            <person name="Gogarten J.P."/>
            <person name="Noll K."/>
            <person name="Richardson P."/>
        </authorList>
    </citation>
    <scope>NUCLEOTIDE SEQUENCE [LARGE SCALE GENOMIC DNA]</scope>
    <source>
        <strain>ATCC BAA-301 / DSM 14385 / NBRC 107922 / TMO</strain>
    </source>
</reference>
<sequence length="424" mass="48824">MIDIRLIREKPDFVKKALEKRNYEKKMVDDLLSLDAQFRELTNQINQLRAQRNSISKMVAQAKSSGKTEEIENLTEEGKKIGRQIDSIEDQLKEIKVQMEKLMLLVPNIPDDSVPEGKDETSNREIRKWGDPKKFDYNPQAHWDLGPSLGLMDFDRAAKLSGSRFTVMYGMFAKLERALTNFMLDMHTKEHGYTEVWLPHIVKRETMTITGQLPKFEEEAYRIEADDLFLIPTAEVPLVALRSNEILEEKDLPLLYTAYTPCYRREAGSYGKDVRGMIRQHQFDKVELVWITTPERSFEDLETLVSHAEEVLRRLELPYRVIQLCSGDLGFGAAKTYDLEVWLPSYNSYKEISSCSNDTDFQARRGNIRYRRKDGKISFVHTLNGSGVAVGRTLVAIIENYQRADGRIDVPKALQPYLGCEVLG</sequence>
<evidence type="ECO:0000255" key="1">
    <source>
        <dbReference type="HAMAP-Rule" id="MF_00176"/>
    </source>
</evidence>
<name>SYS_PSELT</name>
<feature type="chain" id="PRO_1000058358" description="Serine--tRNA ligase">
    <location>
        <begin position="1"/>
        <end position="424"/>
    </location>
</feature>
<feature type="binding site" evidence="1">
    <location>
        <begin position="233"/>
        <end position="235"/>
    </location>
    <ligand>
        <name>L-serine</name>
        <dbReference type="ChEBI" id="CHEBI:33384"/>
    </ligand>
</feature>
<feature type="binding site" evidence="1">
    <location>
        <begin position="264"/>
        <end position="266"/>
    </location>
    <ligand>
        <name>ATP</name>
        <dbReference type="ChEBI" id="CHEBI:30616"/>
    </ligand>
</feature>
<feature type="binding site" evidence="1">
    <location>
        <position position="287"/>
    </location>
    <ligand>
        <name>L-serine</name>
        <dbReference type="ChEBI" id="CHEBI:33384"/>
    </ligand>
</feature>
<feature type="binding site" evidence="1">
    <location>
        <begin position="351"/>
        <end position="354"/>
    </location>
    <ligand>
        <name>ATP</name>
        <dbReference type="ChEBI" id="CHEBI:30616"/>
    </ligand>
</feature>
<feature type="binding site" evidence="1">
    <location>
        <position position="386"/>
    </location>
    <ligand>
        <name>L-serine</name>
        <dbReference type="ChEBI" id="CHEBI:33384"/>
    </ligand>
</feature>
<dbReference type="EC" id="6.1.1.11" evidence="1"/>
<dbReference type="EMBL" id="CP000812">
    <property type="protein sequence ID" value="ABV32800.1"/>
    <property type="molecule type" value="Genomic_DNA"/>
</dbReference>
<dbReference type="RefSeq" id="WP_012002281.1">
    <property type="nucleotide sequence ID" value="NZ_BSDV01000001.1"/>
</dbReference>
<dbReference type="SMR" id="A8F3R6"/>
<dbReference type="STRING" id="416591.Tlet_0230"/>
<dbReference type="KEGG" id="tle:Tlet_0230"/>
<dbReference type="eggNOG" id="COG0172">
    <property type="taxonomic scope" value="Bacteria"/>
</dbReference>
<dbReference type="HOGENOM" id="CLU_023797_1_1_0"/>
<dbReference type="OrthoDB" id="9804647at2"/>
<dbReference type="UniPathway" id="UPA00906">
    <property type="reaction ID" value="UER00895"/>
</dbReference>
<dbReference type="Proteomes" id="UP000002016">
    <property type="component" value="Chromosome"/>
</dbReference>
<dbReference type="GO" id="GO:0005737">
    <property type="term" value="C:cytoplasm"/>
    <property type="evidence" value="ECO:0007669"/>
    <property type="project" value="UniProtKB-SubCell"/>
</dbReference>
<dbReference type="GO" id="GO:0005524">
    <property type="term" value="F:ATP binding"/>
    <property type="evidence" value="ECO:0007669"/>
    <property type="project" value="UniProtKB-UniRule"/>
</dbReference>
<dbReference type="GO" id="GO:0004828">
    <property type="term" value="F:serine-tRNA ligase activity"/>
    <property type="evidence" value="ECO:0007669"/>
    <property type="project" value="UniProtKB-UniRule"/>
</dbReference>
<dbReference type="GO" id="GO:0016260">
    <property type="term" value="P:selenocysteine biosynthetic process"/>
    <property type="evidence" value="ECO:0007669"/>
    <property type="project" value="UniProtKB-UniRule"/>
</dbReference>
<dbReference type="GO" id="GO:0006434">
    <property type="term" value="P:seryl-tRNA aminoacylation"/>
    <property type="evidence" value="ECO:0007669"/>
    <property type="project" value="UniProtKB-UniRule"/>
</dbReference>
<dbReference type="CDD" id="cd00770">
    <property type="entry name" value="SerRS_core"/>
    <property type="match status" value="1"/>
</dbReference>
<dbReference type="Gene3D" id="3.30.930.10">
    <property type="entry name" value="Bira Bifunctional Protein, Domain 2"/>
    <property type="match status" value="1"/>
</dbReference>
<dbReference type="Gene3D" id="1.10.287.40">
    <property type="entry name" value="Serine-tRNA synthetase, tRNA binding domain"/>
    <property type="match status" value="1"/>
</dbReference>
<dbReference type="HAMAP" id="MF_00176">
    <property type="entry name" value="Ser_tRNA_synth_type1"/>
    <property type="match status" value="1"/>
</dbReference>
<dbReference type="InterPro" id="IPR002314">
    <property type="entry name" value="aa-tRNA-synt_IIb"/>
</dbReference>
<dbReference type="InterPro" id="IPR006195">
    <property type="entry name" value="aa-tRNA-synth_II"/>
</dbReference>
<dbReference type="InterPro" id="IPR045864">
    <property type="entry name" value="aa-tRNA-synth_II/BPL/LPL"/>
</dbReference>
<dbReference type="InterPro" id="IPR002317">
    <property type="entry name" value="Ser-tRNA-ligase_type_1"/>
</dbReference>
<dbReference type="InterPro" id="IPR015866">
    <property type="entry name" value="Ser-tRNA-synth_1_N"/>
</dbReference>
<dbReference type="InterPro" id="IPR042103">
    <property type="entry name" value="SerRS_1_N_sf"/>
</dbReference>
<dbReference type="InterPro" id="IPR033729">
    <property type="entry name" value="SerRS_core"/>
</dbReference>
<dbReference type="InterPro" id="IPR010978">
    <property type="entry name" value="tRNA-bd_arm"/>
</dbReference>
<dbReference type="NCBIfam" id="TIGR00414">
    <property type="entry name" value="serS"/>
    <property type="match status" value="1"/>
</dbReference>
<dbReference type="PANTHER" id="PTHR43697:SF1">
    <property type="entry name" value="SERINE--TRNA LIGASE"/>
    <property type="match status" value="1"/>
</dbReference>
<dbReference type="PANTHER" id="PTHR43697">
    <property type="entry name" value="SERYL-TRNA SYNTHETASE"/>
    <property type="match status" value="1"/>
</dbReference>
<dbReference type="Pfam" id="PF02403">
    <property type="entry name" value="Seryl_tRNA_N"/>
    <property type="match status" value="1"/>
</dbReference>
<dbReference type="Pfam" id="PF00587">
    <property type="entry name" value="tRNA-synt_2b"/>
    <property type="match status" value="1"/>
</dbReference>
<dbReference type="PIRSF" id="PIRSF001529">
    <property type="entry name" value="Ser-tRNA-synth_IIa"/>
    <property type="match status" value="1"/>
</dbReference>
<dbReference type="PRINTS" id="PR00981">
    <property type="entry name" value="TRNASYNTHSER"/>
</dbReference>
<dbReference type="SUPFAM" id="SSF55681">
    <property type="entry name" value="Class II aaRS and biotin synthetases"/>
    <property type="match status" value="1"/>
</dbReference>
<dbReference type="SUPFAM" id="SSF46589">
    <property type="entry name" value="tRNA-binding arm"/>
    <property type="match status" value="1"/>
</dbReference>
<dbReference type="PROSITE" id="PS50862">
    <property type="entry name" value="AA_TRNA_LIGASE_II"/>
    <property type="match status" value="1"/>
</dbReference>
<organism>
    <name type="scientific">Pseudothermotoga lettingae (strain ATCC BAA-301 / DSM 14385 / NBRC 107922 / TMO)</name>
    <name type="common">Thermotoga lettingae</name>
    <dbReference type="NCBI Taxonomy" id="416591"/>
    <lineage>
        <taxon>Bacteria</taxon>
        <taxon>Thermotogati</taxon>
        <taxon>Thermotogota</taxon>
        <taxon>Thermotogae</taxon>
        <taxon>Thermotogales</taxon>
        <taxon>Thermotogaceae</taxon>
        <taxon>Pseudothermotoga</taxon>
    </lineage>
</organism>
<keyword id="KW-0030">Aminoacyl-tRNA synthetase</keyword>
<keyword id="KW-0067">ATP-binding</keyword>
<keyword id="KW-0963">Cytoplasm</keyword>
<keyword id="KW-0436">Ligase</keyword>
<keyword id="KW-0547">Nucleotide-binding</keyword>
<keyword id="KW-0648">Protein biosynthesis</keyword>
<keyword id="KW-1185">Reference proteome</keyword>